<name>RNT_SALPA</name>
<accession>Q5PH07</accession>
<evidence type="ECO:0000255" key="1">
    <source>
        <dbReference type="HAMAP-Rule" id="MF_00157"/>
    </source>
</evidence>
<dbReference type="EC" id="3.1.13.-" evidence="1"/>
<dbReference type="EMBL" id="CP000026">
    <property type="protein sequence ID" value="AAV77360.1"/>
    <property type="molecule type" value="Genomic_DNA"/>
</dbReference>
<dbReference type="RefSeq" id="WP_001282267.1">
    <property type="nucleotide sequence ID" value="NC_006511.1"/>
</dbReference>
<dbReference type="SMR" id="Q5PH07"/>
<dbReference type="KEGG" id="spt:SPA1419"/>
<dbReference type="HOGENOM" id="CLU_082724_0_0_6"/>
<dbReference type="Proteomes" id="UP000008185">
    <property type="component" value="Chromosome"/>
</dbReference>
<dbReference type="GO" id="GO:0005829">
    <property type="term" value="C:cytosol"/>
    <property type="evidence" value="ECO:0007669"/>
    <property type="project" value="TreeGrafter"/>
</dbReference>
<dbReference type="GO" id="GO:0008408">
    <property type="term" value="F:3'-5' exonuclease activity"/>
    <property type="evidence" value="ECO:0007669"/>
    <property type="project" value="TreeGrafter"/>
</dbReference>
<dbReference type="GO" id="GO:0000287">
    <property type="term" value="F:magnesium ion binding"/>
    <property type="evidence" value="ECO:0007669"/>
    <property type="project" value="UniProtKB-UniRule"/>
</dbReference>
<dbReference type="GO" id="GO:0003676">
    <property type="term" value="F:nucleic acid binding"/>
    <property type="evidence" value="ECO:0007669"/>
    <property type="project" value="InterPro"/>
</dbReference>
<dbReference type="GO" id="GO:0016896">
    <property type="term" value="F:RNA exonuclease activity, producing 5'-phosphomonoesters"/>
    <property type="evidence" value="ECO:0007669"/>
    <property type="project" value="UniProtKB-UniRule"/>
</dbReference>
<dbReference type="GO" id="GO:0045004">
    <property type="term" value="P:DNA replication proofreading"/>
    <property type="evidence" value="ECO:0007669"/>
    <property type="project" value="TreeGrafter"/>
</dbReference>
<dbReference type="GO" id="GO:0008033">
    <property type="term" value="P:tRNA processing"/>
    <property type="evidence" value="ECO:0007669"/>
    <property type="project" value="UniProtKB-KW"/>
</dbReference>
<dbReference type="CDD" id="cd06134">
    <property type="entry name" value="RNaseT"/>
    <property type="match status" value="1"/>
</dbReference>
<dbReference type="FunFam" id="3.30.420.10:FF:000009">
    <property type="entry name" value="Ribonuclease T"/>
    <property type="match status" value="1"/>
</dbReference>
<dbReference type="Gene3D" id="3.30.420.10">
    <property type="entry name" value="Ribonuclease H-like superfamily/Ribonuclease H"/>
    <property type="match status" value="1"/>
</dbReference>
<dbReference type="HAMAP" id="MF_00157">
    <property type="entry name" value="RNase_T"/>
    <property type="match status" value="1"/>
</dbReference>
<dbReference type="InterPro" id="IPR013520">
    <property type="entry name" value="Exonuclease_RNaseT/DNA_pol3"/>
</dbReference>
<dbReference type="InterPro" id="IPR005987">
    <property type="entry name" value="RNase_T"/>
</dbReference>
<dbReference type="InterPro" id="IPR012337">
    <property type="entry name" value="RNaseH-like_sf"/>
</dbReference>
<dbReference type="InterPro" id="IPR036397">
    <property type="entry name" value="RNaseH_sf"/>
</dbReference>
<dbReference type="NCBIfam" id="TIGR01298">
    <property type="entry name" value="RNaseT"/>
    <property type="match status" value="1"/>
</dbReference>
<dbReference type="PANTHER" id="PTHR30231">
    <property type="entry name" value="DNA POLYMERASE III SUBUNIT EPSILON"/>
    <property type="match status" value="1"/>
</dbReference>
<dbReference type="PANTHER" id="PTHR30231:SF2">
    <property type="entry name" value="RIBONUCLEASE T"/>
    <property type="match status" value="1"/>
</dbReference>
<dbReference type="Pfam" id="PF00929">
    <property type="entry name" value="RNase_T"/>
    <property type="match status" value="1"/>
</dbReference>
<dbReference type="SMART" id="SM00479">
    <property type="entry name" value="EXOIII"/>
    <property type="match status" value="1"/>
</dbReference>
<dbReference type="SUPFAM" id="SSF53098">
    <property type="entry name" value="Ribonuclease H-like"/>
    <property type="match status" value="1"/>
</dbReference>
<sequence>MSDNAQLSGLCDRFRGFYPVVIDVETAGFNAKTDALLEIAAITLKMDEQGWLMPDMTLHFHVEPFAGANLQPEALAFNGIDPSNPLRGAVSEYEALHAIFKMVRKGIKDSGCSRAIMVAHNATFDHSFMMAAAERASLKRNPFHPFVTFDTAALSGLALGQTVLSKACLAAGMEFDGEKAHSALYDTERTAVLFCEIVNRWKRLGGWPLPLPTDK</sequence>
<gene>
    <name evidence="1" type="primary">rnt</name>
    <name type="ordered locus">SPA1419</name>
</gene>
<organism>
    <name type="scientific">Salmonella paratyphi A (strain ATCC 9150 / SARB42)</name>
    <dbReference type="NCBI Taxonomy" id="295319"/>
    <lineage>
        <taxon>Bacteria</taxon>
        <taxon>Pseudomonadati</taxon>
        <taxon>Pseudomonadota</taxon>
        <taxon>Gammaproteobacteria</taxon>
        <taxon>Enterobacterales</taxon>
        <taxon>Enterobacteriaceae</taxon>
        <taxon>Salmonella</taxon>
    </lineage>
</organism>
<reference key="1">
    <citation type="journal article" date="2004" name="Nat. Genet.">
        <title>Comparison of genome degradation in Paratyphi A and Typhi, human-restricted serovars of Salmonella enterica that cause typhoid.</title>
        <authorList>
            <person name="McClelland M."/>
            <person name="Sanderson K.E."/>
            <person name="Clifton S.W."/>
            <person name="Latreille P."/>
            <person name="Porwollik S."/>
            <person name="Sabo A."/>
            <person name="Meyer R."/>
            <person name="Bieri T."/>
            <person name="Ozersky P."/>
            <person name="McLellan M."/>
            <person name="Harkins C.R."/>
            <person name="Wang C."/>
            <person name="Nguyen C."/>
            <person name="Berghoff A."/>
            <person name="Elliott G."/>
            <person name="Kohlberg S."/>
            <person name="Strong C."/>
            <person name="Du F."/>
            <person name="Carter J."/>
            <person name="Kremizki C."/>
            <person name="Layman D."/>
            <person name="Leonard S."/>
            <person name="Sun H."/>
            <person name="Fulton L."/>
            <person name="Nash W."/>
            <person name="Miner T."/>
            <person name="Minx P."/>
            <person name="Delehaunty K."/>
            <person name="Fronick C."/>
            <person name="Magrini V."/>
            <person name="Nhan M."/>
            <person name="Warren W."/>
            <person name="Florea L."/>
            <person name="Spieth J."/>
            <person name="Wilson R.K."/>
        </authorList>
    </citation>
    <scope>NUCLEOTIDE SEQUENCE [LARGE SCALE GENOMIC DNA]</scope>
    <source>
        <strain>ATCC 9150 / SARB42</strain>
    </source>
</reference>
<keyword id="KW-0269">Exonuclease</keyword>
<keyword id="KW-0378">Hydrolase</keyword>
<keyword id="KW-0460">Magnesium</keyword>
<keyword id="KW-0479">Metal-binding</keyword>
<keyword id="KW-0540">Nuclease</keyword>
<keyword id="KW-0819">tRNA processing</keyword>
<protein>
    <recommendedName>
        <fullName evidence="1">Ribonuclease T</fullName>
        <ecNumber evidence="1">3.1.13.-</ecNumber>
    </recommendedName>
    <alternativeName>
        <fullName evidence="1">Exoribonuclease T</fullName>
        <shortName evidence="1">RNase T</shortName>
    </alternativeName>
</protein>
<feature type="chain" id="PRO_1000011411" description="Ribonuclease T">
    <location>
        <begin position="1"/>
        <end position="215"/>
    </location>
</feature>
<feature type="domain" description="Exonuclease" evidence="1">
    <location>
        <begin position="20"/>
        <end position="194"/>
    </location>
</feature>
<feature type="active site" description="Proton donor/acceptor" evidence="1">
    <location>
        <position position="181"/>
    </location>
</feature>
<feature type="binding site" evidence="1">
    <location>
        <position position="23"/>
    </location>
    <ligand>
        <name>Mg(2+)</name>
        <dbReference type="ChEBI" id="CHEBI:18420"/>
        <label>1</label>
        <note>catalytic</note>
    </ligand>
</feature>
<feature type="binding site" evidence="1">
    <location>
        <position position="23"/>
    </location>
    <ligand>
        <name>Mg(2+)</name>
        <dbReference type="ChEBI" id="CHEBI:18420"/>
        <label>2</label>
        <note>catalytic</note>
    </ligand>
</feature>
<feature type="binding site" evidence="1">
    <location>
        <position position="25"/>
    </location>
    <ligand>
        <name>Mg(2+)</name>
        <dbReference type="ChEBI" id="CHEBI:18420"/>
        <label>2</label>
        <note>catalytic</note>
    </ligand>
</feature>
<feature type="binding site" evidence="1">
    <location>
        <position position="181"/>
    </location>
    <ligand>
        <name>Mg(2+)</name>
        <dbReference type="ChEBI" id="CHEBI:18420"/>
        <label>2</label>
        <note>catalytic</note>
    </ligand>
</feature>
<feature type="binding site" evidence="1">
    <location>
        <position position="186"/>
    </location>
    <ligand>
        <name>Mg(2+)</name>
        <dbReference type="ChEBI" id="CHEBI:18420"/>
        <label>2</label>
        <note>catalytic</note>
    </ligand>
</feature>
<feature type="site" description="Important for substrate binding and specificity" evidence="1">
    <location>
        <position position="29"/>
    </location>
</feature>
<feature type="site" description="Important for substrate binding and specificity" evidence="1">
    <location>
        <position position="77"/>
    </location>
</feature>
<feature type="site" description="Important for substrate binding and specificity" evidence="1">
    <location>
        <position position="124"/>
    </location>
</feature>
<feature type="site" description="Important for substrate binding and specificity" evidence="1">
    <location>
        <position position="146"/>
    </location>
</feature>
<proteinExistence type="inferred from homology"/>
<comment type="function">
    <text evidence="1">Trims short 3' overhangs of a variety of RNA species, leaving a one or two nucleotide 3' overhang. Responsible for the end-turnover of tRNA: specifically removes the terminal AMP residue from uncharged tRNA (tRNA-C-C-A). Also appears to be involved in tRNA biosynthesis.</text>
</comment>
<comment type="cofactor">
    <cofactor evidence="1">
        <name>Mg(2+)</name>
        <dbReference type="ChEBI" id="CHEBI:18420"/>
    </cofactor>
    <text evidence="1">Binds two Mg(2+) per subunit. The active form of the enzyme binds two Mg(2+) ions in its active site. The first Mg(2+) forms only one salt bridge with the protein.</text>
</comment>
<comment type="subunit">
    <text evidence="1">Homodimer.</text>
</comment>
<comment type="similarity">
    <text evidence="1">Belongs to the RNase T family.</text>
</comment>